<protein>
    <recommendedName>
        <fullName>Probable ATP-dependent RNA helicase DDX52</fullName>
        <ecNumber>3.6.4.13</ecNumber>
    </recommendedName>
    <alternativeName>
        <fullName>DEAD box protein 52</fullName>
    </alternativeName>
</protein>
<keyword id="KW-0007">Acetylation</keyword>
<keyword id="KW-0067">ATP-binding</keyword>
<keyword id="KW-0347">Helicase</keyword>
<keyword id="KW-0378">Hydrolase</keyword>
<keyword id="KW-0547">Nucleotide-binding</keyword>
<keyword id="KW-0539">Nucleus</keyword>
<keyword id="KW-0597">Phosphoprotein</keyword>
<keyword id="KW-1185">Reference proteome</keyword>
<keyword id="KW-0694">RNA-binding</keyword>
<organism>
    <name type="scientific">Bos taurus</name>
    <name type="common">Bovine</name>
    <dbReference type="NCBI Taxonomy" id="9913"/>
    <lineage>
        <taxon>Eukaryota</taxon>
        <taxon>Metazoa</taxon>
        <taxon>Chordata</taxon>
        <taxon>Craniata</taxon>
        <taxon>Vertebrata</taxon>
        <taxon>Euteleostomi</taxon>
        <taxon>Mammalia</taxon>
        <taxon>Eutheria</taxon>
        <taxon>Laurasiatheria</taxon>
        <taxon>Artiodactyla</taxon>
        <taxon>Ruminantia</taxon>
        <taxon>Pecora</taxon>
        <taxon>Bovidae</taxon>
        <taxon>Bovinae</taxon>
        <taxon>Bos</taxon>
    </lineage>
</organism>
<proteinExistence type="evidence at transcript level"/>
<accession>A5D7C1</accession>
<dbReference type="EC" id="3.6.4.13"/>
<dbReference type="EMBL" id="BC140501">
    <property type="protein sequence ID" value="AAI40502.1"/>
    <property type="molecule type" value="mRNA"/>
</dbReference>
<dbReference type="RefSeq" id="NP_001096708.1">
    <property type="nucleotide sequence ID" value="NM_001103238.1"/>
</dbReference>
<dbReference type="SMR" id="A5D7C1"/>
<dbReference type="FunCoup" id="A5D7C1">
    <property type="interactions" value="3857"/>
</dbReference>
<dbReference type="STRING" id="9913.ENSBTAP00000013622"/>
<dbReference type="PaxDb" id="9913-ENSBTAP00000013622"/>
<dbReference type="Ensembl" id="ENSBTAT00000013622.5">
    <property type="protein sequence ID" value="ENSBTAP00000013622.4"/>
    <property type="gene ID" value="ENSBTAG00000010313.6"/>
</dbReference>
<dbReference type="GeneID" id="510826"/>
<dbReference type="KEGG" id="bta:510826"/>
<dbReference type="CTD" id="11056"/>
<dbReference type="VEuPathDB" id="HostDB:ENSBTAG00000010313"/>
<dbReference type="VGNC" id="VGNC:27975">
    <property type="gene designation" value="DDX52"/>
</dbReference>
<dbReference type="eggNOG" id="KOG0344">
    <property type="taxonomic scope" value="Eukaryota"/>
</dbReference>
<dbReference type="GeneTree" id="ENSGT00550000074863"/>
<dbReference type="HOGENOM" id="CLU_003041_1_4_1"/>
<dbReference type="InParanoid" id="A5D7C1"/>
<dbReference type="OMA" id="EMAHSIM"/>
<dbReference type="OrthoDB" id="360161at2759"/>
<dbReference type="TreeFam" id="TF314448"/>
<dbReference type="Reactome" id="R-BTA-6791226">
    <property type="pathway name" value="Major pathway of rRNA processing in the nucleolus and cytosol"/>
</dbReference>
<dbReference type="CD-CODE" id="D7FE2080">
    <property type="entry name" value="Nucleolus"/>
</dbReference>
<dbReference type="Proteomes" id="UP000009136">
    <property type="component" value="Chromosome 19"/>
</dbReference>
<dbReference type="Bgee" id="ENSBTAG00000010313">
    <property type="expression patterns" value="Expressed in conceptus and 108 other cell types or tissues"/>
</dbReference>
<dbReference type="GO" id="GO:0005730">
    <property type="term" value="C:nucleolus"/>
    <property type="evidence" value="ECO:0007669"/>
    <property type="project" value="UniProtKB-SubCell"/>
</dbReference>
<dbReference type="GO" id="GO:0005524">
    <property type="term" value="F:ATP binding"/>
    <property type="evidence" value="ECO:0007669"/>
    <property type="project" value="UniProtKB-KW"/>
</dbReference>
<dbReference type="GO" id="GO:0016887">
    <property type="term" value="F:ATP hydrolysis activity"/>
    <property type="evidence" value="ECO:0007669"/>
    <property type="project" value="RHEA"/>
</dbReference>
<dbReference type="GO" id="GO:0003723">
    <property type="term" value="F:RNA binding"/>
    <property type="evidence" value="ECO:0007669"/>
    <property type="project" value="UniProtKB-KW"/>
</dbReference>
<dbReference type="GO" id="GO:0003724">
    <property type="term" value="F:RNA helicase activity"/>
    <property type="evidence" value="ECO:0007669"/>
    <property type="project" value="UniProtKB-EC"/>
</dbReference>
<dbReference type="GO" id="GO:0030490">
    <property type="term" value="P:maturation of SSU-rRNA"/>
    <property type="evidence" value="ECO:0000318"/>
    <property type="project" value="GO_Central"/>
</dbReference>
<dbReference type="CDD" id="cd17957">
    <property type="entry name" value="DEADc_DDX52"/>
    <property type="match status" value="1"/>
</dbReference>
<dbReference type="CDD" id="cd18787">
    <property type="entry name" value="SF2_C_DEAD"/>
    <property type="match status" value="1"/>
</dbReference>
<dbReference type="FunFam" id="3.40.50.300:FF:000906">
    <property type="entry name" value="Probable ATP-dependent RNA helicase DDX52"/>
    <property type="match status" value="1"/>
</dbReference>
<dbReference type="FunFam" id="3.40.50.300:FF:000759">
    <property type="entry name" value="probable ATP-dependent RNA helicase DDX52"/>
    <property type="match status" value="1"/>
</dbReference>
<dbReference type="Gene3D" id="3.40.50.300">
    <property type="entry name" value="P-loop containing nucleotide triphosphate hydrolases"/>
    <property type="match status" value="2"/>
</dbReference>
<dbReference type="InterPro" id="IPR044764">
    <property type="entry name" value="DDX52/Rok1_DEADc"/>
</dbReference>
<dbReference type="InterPro" id="IPR011545">
    <property type="entry name" value="DEAD/DEAH_box_helicase_dom"/>
</dbReference>
<dbReference type="InterPro" id="IPR050079">
    <property type="entry name" value="DEAD_box_RNA_helicase"/>
</dbReference>
<dbReference type="InterPro" id="IPR014001">
    <property type="entry name" value="Helicase_ATP-bd"/>
</dbReference>
<dbReference type="InterPro" id="IPR001650">
    <property type="entry name" value="Helicase_C-like"/>
</dbReference>
<dbReference type="InterPro" id="IPR027417">
    <property type="entry name" value="P-loop_NTPase"/>
</dbReference>
<dbReference type="InterPro" id="IPR014014">
    <property type="entry name" value="RNA_helicase_DEAD_Q_motif"/>
</dbReference>
<dbReference type="PANTHER" id="PTHR47959">
    <property type="entry name" value="ATP-DEPENDENT RNA HELICASE RHLE-RELATED"/>
    <property type="match status" value="1"/>
</dbReference>
<dbReference type="PANTHER" id="PTHR47959:SF15">
    <property type="entry name" value="RNA HELICASE"/>
    <property type="match status" value="1"/>
</dbReference>
<dbReference type="Pfam" id="PF00270">
    <property type="entry name" value="DEAD"/>
    <property type="match status" value="1"/>
</dbReference>
<dbReference type="Pfam" id="PF00271">
    <property type="entry name" value="Helicase_C"/>
    <property type="match status" value="1"/>
</dbReference>
<dbReference type="SMART" id="SM00487">
    <property type="entry name" value="DEXDc"/>
    <property type="match status" value="1"/>
</dbReference>
<dbReference type="SMART" id="SM00490">
    <property type="entry name" value="HELICc"/>
    <property type="match status" value="1"/>
</dbReference>
<dbReference type="SUPFAM" id="SSF52540">
    <property type="entry name" value="P-loop containing nucleoside triphosphate hydrolases"/>
    <property type="match status" value="1"/>
</dbReference>
<dbReference type="PROSITE" id="PS51192">
    <property type="entry name" value="HELICASE_ATP_BIND_1"/>
    <property type="match status" value="1"/>
</dbReference>
<dbReference type="PROSITE" id="PS51194">
    <property type="entry name" value="HELICASE_CTER"/>
    <property type="match status" value="1"/>
</dbReference>
<dbReference type="PROSITE" id="PS51195">
    <property type="entry name" value="Q_MOTIF"/>
    <property type="match status" value="1"/>
</dbReference>
<gene>
    <name type="primary">DDX52</name>
</gene>
<name>DDX52_BOVIN</name>
<comment type="catalytic activity">
    <reaction>
        <text>ATP + H2O = ADP + phosphate + H(+)</text>
        <dbReference type="Rhea" id="RHEA:13065"/>
        <dbReference type="ChEBI" id="CHEBI:15377"/>
        <dbReference type="ChEBI" id="CHEBI:15378"/>
        <dbReference type="ChEBI" id="CHEBI:30616"/>
        <dbReference type="ChEBI" id="CHEBI:43474"/>
        <dbReference type="ChEBI" id="CHEBI:456216"/>
        <dbReference type="EC" id="3.6.4.13"/>
    </reaction>
</comment>
<comment type="subcellular location">
    <subcellularLocation>
        <location evidence="1">Nucleus</location>
        <location evidence="1">Nucleolus</location>
    </subcellularLocation>
</comment>
<comment type="similarity">
    <text evidence="6">Belongs to the DEAD box helicase family. DDX52/ROK1 subfamily.</text>
</comment>
<evidence type="ECO:0000250" key="1"/>
<evidence type="ECO:0000250" key="2">
    <source>
        <dbReference type="UniProtKB" id="Q9Y2R4"/>
    </source>
</evidence>
<evidence type="ECO:0000255" key="3">
    <source>
        <dbReference type="PROSITE-ProRule" id="PRU00541"/>
    </source>
</evidence>
<evidence type="ECO:0000255" key="4">
    <source>
        <dbReference type="PROSITE-ProRule" id="PRU00542"/>
    </source>
</evidence>
<evidence type="ECO:0000256" key="5">
    <source>
        <dbReference type="SAM" id="MobiDB-lite"/>
    </source>
</evidence>
<evidence type="ECO:0000305" key="6"/>
<feature type="chain" id="PRO_0000310277" description="Probable ATP-dependent RNA helicase DDX52">
    <location>
        <begin position="1"/>
        <end position="596"/>
    </location>
</feature>
<feature type="domain" description="Helicase ATP-binding" evidence="3">
    <location>
        <begin position="194"/>
        <end position="372"/>
    </location>
</feature>
<feature type="domain" description="Helicase C-terminal" evidence="4">
    <location>
        <begin position="383"/>
        <end position="544"/>
    </location>
</feature>
<feature type="region of interest" description="Disordered" evidence="5">
    <location>
        <begin position="68"/>
        <end position="94"/>
    </location>
</feature>
<feature type="region of interest" description="Disordered" evidence="5">
    <location>
        <begin position="575"/>
        <end position="596"/>
    </location>
</feature>
<feature type="short sequence motif" description="Q motif">
    <location>
        <begin position="163"/>
        <end position="191"/>
    </location>
</feature>
<feature type="short sequence motif" description="DEAD box">
    <location>
        <begin position="316"/>
        <end position="319"/>
    </location>
</feature>
<feature type="compositionally biased region" description="Basic residues" evidence="5">
    <location>
        <begin position="577"/>
        <end position="589"/>
    </location>
</feature>
<feature type="binding site" evidence="3">
    <location>
        <begin position="207"/>
        <end position="214"/>
    </location>
    <ligand>
        <name>ATP</name>
        <dbReference type="ChEBI" id="CHEBI:30616"/>
    </ligand>
</feature>
<feature type="modified residue" description="N6-acetyllysine" evidence="2">
    <location>
        <position position="15"/>
    </location>
</feature>
<feature type="modified residue" description="Phosphoserine" evidence="2">
    <location>
        <position position="39"/>
    </location>
</feature>
<sequence>MDAHDLFRRLGVGAKFDLRRFSADAARFQIGKRKYDFDSSEVLQGLDFFGNKKPVPGDCGALRTHQELPDEEKTEESQIERKKQNRKKKKITSEITSEEEVSTIQWISSVEAKIEDKNVKRKNKLTSGKLEQLRKEKLNFFRNKHKIHVQGTDLPDPIATFQQLDQEYKINSRLLQNILDAGFQTPTPIQMQAIPVMLHGRELLASAPTGSGKTLAFSIPILMHLKQPTNKGFRALIISPTRELASQIHRELVKLSEGTGFRIHMIHKAAVAAKKFGPKSSKKFDILVTTPNRLIYLLKQDPPGIDLTSVEWLVVDESDKLFEDGKTGFRDQLASIFLACTSHKVKRAMFSATFAYDVEQWCRLNLDSVITVSVGARNSAVETVEQELLFVGSETGKLLAMRELVKKGFNPPVLVFVQSIERAKELFHELIYEGINVDVIHADRTQQQRDNTVHSFRAGKIWVLICTALLARGIDFKGVNLVINYDFPTSSVEYIHRIGRTGRAGHKGKAVTFFTEDDKPLLRSVANVIQQAGCPVPEYIKGFQKLLSKQKKKMIKKPLERESISTTPKYFLEKAKDKRKKVTGQNKKKVAPEDKS</sequence>
<reference key="1">
    <citation type="submission" date="2007-04" db="EMBL/GenBank/DDBJ databases">
        <authorList>
            <consortium name="NIH - Mammalian Gene Collection (MGC) project"/>
        </authorList>
    </citation>
    <scope>NUCLEOTIDE SEQUENCE [LARGE SCALE MRNA]</scope>
    <source>
        <strain>Hereford</strain>
        <tissue>Hippocampus</tissue>
    </source>
</reference>